<comment type="function">
    <text evidence="1">Inhibits HSPA1A chaperone activity by changing the conformation of the ATP-binding domain of HSPA1A and interfering with ATP binding. Interferes with ubiquitination mediated by STUB1 and inhibits chaperone-assisted degradation of target proteins (By similarity).</text>
</comment>
<comment type="subunit">
    <text evidence="1">Interacts with the ATP-binding domain of HSPA1A. Detected in a ternary complex containing STUB1, HSPA1A and HSPBP1 (By similarity). Interacts with PGLYRP1; this interaction blocks the cytotoxic activity of the PGLYRP1-HSPA1A complex (By similarity).</text>
</comment>
<comment type="sequence caution" evidence="4">
    <conflict type="frameshift">
        <sequence resource="EMBL-CDS" id="BAB28756"/>
    </conflict>
</comment>
<dbReference type="EMBL" id="AF338351">
    <property type="protein sequence ID" value="AAK11657.1"/>
    <property type="molecule type" value="mRNA"/>
</dbReference>
<dbReference type="EMBL" id="AK013263">
    <property type="protein sequence ID" value="BAB28756.1"/>
    <property type="status" value="ALT_FRAME"/>
    <property type="molecule type" value="mRNA"/>
</dbReference>
<dbReference type="EMBL" id="AK088469">
    <property type="protein sequence ID" value="BAC40373.1"/>
    <property type="molecule type" value="mRNA"/>
</dbReference>
<dbReference type="EMBL" id="BC014758">
    <property type="protein sequence ID" value="AAH14758.1"/>
    <property type="molecule type" value="mRNA"/>
</dbReference>
<dbReference type="CCDS" id="CCDS20740.1"/>
<dbReference type="RefSeq" id="NP_001347558.1">
    <property type="nucleotide sequence ID" value="NM_001360629.1"/>
</dbReference>
<dbReference type="RefSeq" id="NP_077134.1">
    <property type="nucleotide sequence ID" value="NM_024172.4"/>
</dbReference>
<dbReference type="RefSeq" id="XP_006540351.1">
    <property type="nucleotide sequence ID" value="XM_006540288.3"/>
</dbReference>
<dbReference type="RefSeq" id="XP_030098750.1">
    <property type="nucleotide sequence ID" value="XM_030242890.2"/>
</dbReference>
<dbReference type="SMR" id="Q99P31"/>
<dbReference type="BioGRID" id="211323">
    <property type="interactions" value="14"/>
</dbReference>
<dbReference type="FunCoup" id="Q99P31">
    <property type="interactions" value="1422"/>
</dbReference>
<dbReference type="IntAct" id="Q99P31">
    <property type="interactions" value="1"/>
</dbReference>
<dbReference type="STRING" id="10090.ENSMUSP00000078886"/>
<dbReference type="GlyGen" id="Q99P31">
    <property type="glycosylation" value="1 site, 1 O-linked glycan (1 site)"/>
</dbReference>
<dbReference type="iPTMnet" id="Q99P31"/>
<dbReference type="PhosphoSitePlus" id="Q99P31"/>
<dbReference type="SwissPalm" id="Q99P31"/>
<dbReference type="PaxDb" id="10090-ENSMUSP00000078886"/>
<dbReference type="PeptideAtlas" id="Q99P31"/>
<dbReference type="ProteomicsDB" id="273268"/>
<dbReference type="Pumba" id="Q99P31"/>
<dbReference type="Antibodypedia" id="33053">
    <property type="antibodies" value="315 antibodies from 23 providers"/>
</dbReference>
<dbReference type="Ensembl" id="ENSMUST00000079970.6">
    <property type="protein sequence ID" value="ENSMUSP00000078886.5"/>
    <property type="gene ID" value="ENSMUSG00000063802.6"/>
</dbReference>
<dbReference type="GeneID" id="66245"/>
<dbReference type="KEGG" id="mmu:66245"/>
<dbReference type="UCSC" id="uc009eyc.1">
    <property type="organism name" value="mouse"/>
</dbReference>
<dbReference type="AGR" id="MGI:1913495"/>
<dbReference type="CTD" id="23640"/>
<dbReference type="MGI" id="MGI:1913495">
    <property type="gene designation" value="Hspbp1"/>
</dbReference>
<dbReference type="VEuPathDB" id="HostDB:ENSMUSG00000063802"/>
<dbReference type="eggNOG" id="KOG2160">
    <property type="taxonomic scope" value="Eukaryota"/>
</dbReference>
<dbReference type="GeneTree" id="ENSGT00940000153909"/>
<dbReference type="HOGENOM" id="CLU_049387_0_1_1"/>
<dbReference type="InParanoid" id="Q99P31"/>
<dbReference type="OMA" id="CHVQSGL"/>
<dbReference type="OrthoDB" id="10250458at2759"/>
<dbReference type="PhylomeDB" id="Q99P31"/>
<dbReference type="TreeFam" id="TF324307"/>
<dbReference type="BioGRID-ORCS" id="66245">
    <property type="hits" value="0 hits in 76 CRISPR screens"/>
</dbReference>
<dbReference type="ChiTaRS" id="Hspbp1">
    <property type="organism name" value="mouse"/>
</dbReference>
<dbReference type="PRO" id="PR:Q99P31"/>
<dbReference type="Proteomes" id="UP000000589">
    <property type="component" value="Chromosome 7"/>
</dbReference>
<dbReference type="RNAct" id="Q99P31">
    <property type="molecule type" value="protein"/>
</dbReference>
<dbReference type="Bgee" id="ENSMUSG00000063802">
    <property type="expression patterns" value="Expressed in spermatid and 238 other cell types or tissues"/>
</dbReference>
<dbReference type="ExpressionAtlas" id="Q99P31">
    <property type="expression patterns" value="baseline and differential"/>
</dbReference>
<dbReference type="GO" id="GO:0005615">
    <property type="term" value="C:extracellular space"/>
    <property type="evidence" value="ECO:0007669"/>
    <property type="project" value="Ensembl"/>
</dbReference>
<dbReference type="GO" id="GO:0140313">
    <property type="term" value="F:molecular sequestering activity"/>
    <property type="evidence" value="ECO:0007669"/>
    <property type="project" value="Ensembl"/>
</dbReference>
<dbReference type="GO" id="GO:0031625">
    <property type="term" value="F:ubiquitin protein ligase binding"/>
    <property type="evidence" value="ECO:0007669"/>
    <property type="project" value="Ensembl"/>
</dbReference>
<dbReference type="GO" id="GO:0032436">
    <property type="term" value="P:positive regulation of proteasomal ubiquitin-dependent protein catabolic process"/>
    <property type="evidence" value="ECO:0007669"/>
    <property type="project" value="Ensembl"/>
</dbReference>
<dbReference type="GO" id="GO:0031398">
    <property type="term" value="P:positive regulation of protein ubiquitination"/>
    <property type="evidence" value="ECO:0007669"/>
    <property type="project" value="Ensembl"/>
</dbReference>
<dbReference type="FunFam" id="1.25.10.10:FF:000178">
    <property type="entry name" value="hsp70-binding protein 1 isoform X1"/>
    <property type="match status" value="1"/>
</dbReference>
<dbReference type="Gene3D" id="1.25.10.10">
    <property type="entry name" value="Leucine-rich Repeat Variant"/>
    <property type="match status" value="1"/>
</dbReference>
<dbReference type="InterPro" id="IPR011989">
    <property type="entry name" value="ARM-like"/>
</dbReference>
<dbReference type="InterPro" id="IPR016024">
    <property type="entry name" value="ARM-type_fold"/>
</dbReference>
<dbReference type="InterPro" id="IPR050693">
    <property type="entry name" value="Hsp70_NEF-Inhibitors"/>
</dbReference>
<dbReference type="InterPro" id="IPR013918">
    <property type="entry name" value="Nucleotide_exch_fac_Fes1"/>
</dbReference>
<dbReference type="PANTHER" id="PTHR19316:SF18">
    <property type="entry name" value="HSP70-BINDING PROTEIN 1"/>
    <property type="match status" value="1"/>
</dbReference>
<dbReference type="PANTHER" id="PTHR19316">
    <property type="entry name" value="PROTEIN FOLDING REGULATOR"/>
    <property type="match status" value="1"/>
</dbReference>
<dbReference type="Pfam" id="PF08609">
    <property type="entry name" value="Fes1"/>
    <property type="match status" value="1"/>
</dbReference>
<dbReference type="SUPFAM" id="SSF48371">
    <property type="entry name" value="ARM repeat"/>
    <property type="match status" value="1"/>
</dbReference>
<accession>Q99P31</accession>
<accession>Q9CYV8</accession>
<name>HPBP1_MOUSE</name>
<feature type="chain" id="PRO_0000084037" description="Hsp70-binding protein 1">
    <location>
        <begin position="1"/>
        <end position="357"/>
    </location>
</feature>
<feature type="repeat" description="ARM 1">
    <location>
        <begin position="130"/>
        <end position="172"/>
    </location>
</feature>
<feature type="repeat" description="ARM 2">
    <location>
        <begin position="175"/>
        <end position="215"/>
    </location>
</feature>
<feature type="repeat" description="ARM 3">
    <location>
        <begin position="218"/>
        <end position="257"/>
    </location>
</feature>
<feature type="repeat" description="ARM 4">
    <location>
        <begin position="260"/>
        <end position="299"/>
    </location>
</feature>
<feature type="region of interest" description="Disordered" evidence="3">
    <location>
        <begin position="1"/>
        <end position="68"/>
    </location>
</feature>
<feature type="compositionally biased region" description="Gly residues" evidence="3">
    <location>
        <begin position="23"/>
        <end position="35"/>
    </location>
</feature>
<feature type="modified residue" description="Phosphoserine" evidence="5">
    <location>
        <position position="349"/>
    </location>
</feature>
<feature type="modified residue" description="Phosphoserine" evidence="2">
    <location>
        <position position="354"/>
    </location>
</feature>
<feature type="sequence conflict" description="In Ref. 2; BAB28756." evidence="4" ref="2">
    <original>A</original>
    <variation>L</variation>
    <location>
        <position position="109"/>
    </location>
</feature>
<keyword id="KW-0597">Phosphoprotein</keyword>
<keyword id="KW-1185">Reference proteome</keyword>
<keyword id="KW-0677">Repeat</keyword>
<sequence length="357" mass="39167">MADKGSGGSRLPLALPPASQGCSSGGSGSSAGGSGNPRPPRNLQGLLQMAITAGSQEPDPPPEPMSEERRQWLQEAMSAAFRGQREEVEQMKNCLRVLSQATPAMAGEAELATDQQEREGALELLADLCENMDNAADFCQLSGMHLLVGRYLEAGAAGLRWRAAQLIGTCSQNVAAIQEQVLGLGALRKLLRLLDRDSCDTVRVKALFAISCLVREQEAGLLQFLRLDGFSVLMRAMQQQVQKLKVKSAFLLQNLLVGHPEHKGTLCSMGMVQQLVALVRTEHSPFHEHVLGALCSLVTDFPQGVRECREPELGLEELLRHRCQLLQQREEYQEELEFCEKLLQTCFSSPTDDSMDR</sequence>
<gene>
    <name type="primary">Hspbp1</name>
    <name type="synonym">Hspbp</name>
</gene>
<evidence type="ECO:0000250" key="1"/>
<evidence type="ECO:0000250" key="2">
    <source>
        <dbReference type="UniProtKB" id="Q9NZL4"/>
    </source>
</evidence>
<evidence type="ECO:0000256" key="3">
    <source>
        <dbReference type="SAM" id="MobiDB-lite"/>
    </source>
</evidence>
<evidence type="ECO:0000305" key="4"/>
<evidence type="ECO:0007744" key="5">
    <source>
    </source>
</evidence>
<reference key="1">
    <citation type="submission" date="2001-01" db="EMBL/GenBank/DDBJ databases">
        <title>Mouse HspBP sequence.</title>
        <authorList>
            <person name="Guerriero V. Jr."/>
            <person name="Raynes D.A."/>
        </authorList>
    </citation>
    <scope>NUCLEOTIDE SEQUENCE [MRNA]</scope>
    <source>
        <tissue>Mammary gland</tissue>
    </source>
</reference>
<reference key="2">
    <citation type="journal article" date="2005" name="Science">
        <title>The transcriptional landscape of the mammalian genome.</title>
        <authorList>
            <person name="Carninci P."/>
            <person name="Kasukawa T."/>
            <person name="Katayama S."/>
            <person name="Gough J."/>
            <person name="Frith M.C."/>
            <person name="Maeda N."/>
            <person name="Oyama R."/>
            <person name="Ravasi T."/>
            <person name="Lenhard B."/>
            <person name="Wells C."/>
            <person name="Kodzius R."/>
            <person name="Shimokawa K."/>
            <person name="Bajic V.B."/>
            <person name="Brenner S.E."/>
            <person name="Batalov S."/>
            <person name="Forrest A.R."/>
            <person name="Zavolan M."/>
            <person name="Davis M.J."/>
            <person name="Wilming L.G."/>
            <person name="Aidinis V."/>
            <person name="Allen J.E."/>
            <person name="Ambesi-Impiombato A."/>
            <person name="Apweiler R."/>
            <person name="Aturaliya R.N."/>
            <person name="Bailey T.L."/>
            <person name="Bansal M."/>
            <person name="Baxter L."/>
            <person name="Beisel K.W."/>
            <person name="Bersano T."/>
            <person name="Bono H."/>
            <person name="Chalk A.M."/>
            <person name="Chiu K.P."/>
            <person name="Choudhary V."/>
            <person name="Christoffels A."/>
            <person name="Clutterbuck D.R."/>
            <person name="Crowe M.L."/>
            <person name="Dalla E."/>
            <person name="Dalrymple B.P."/>
            <person name="de Bono B."/>
            <person name="Della Gatta G."/>
            <person name="di Bernardo D."/>
            <person name="Down T."/>
            <person name="Engstrom P."/>
            <person name="Fagiolini M."/>
            <person name="Faulkner G."/>
            <person name="Fletcher C.F."/>
            <person name="Fukushima T."/>
            <person name="Furuno M."/>
            <person name="Futaki S."/>
            <person name="Gariboldi M."/>
            <person name="Georgii-Hemming P."/>
            <person name="Gingeras T.R."/>
            <person name="Gojobori T."/>
            <person name="Green R.E."/>
            <person name="Gustincich S."/>
            <person name="Harbers M."/>
            <person name="Hayashi Y."/>
            <person name="Hensch T.K."/>
            <person name="Hirokawa N."/>
            <person name="Hill D."/>
            <person name="Huminiecki L."/>
            <person name="Iacono M."/>
            <person name="Ikeo K."/>
            <person name="Iwama A."/>
            <person name="Ishikawa T."/>
            <person name="Jakt M."/>
            <person name="Kanapin A."/>
            <person name="Katoh M."/>
            <person name="Kawasawa Y."/>
            <person name="Kelso J."/>
            <person name="Kitamura H."/>
            <person name="Kitano H."/>
            <person name="Kollias G."/>
            <person name="Krishnan S.P."/>
            <person name="Kruger A."/>
            <person name="Kummerfeld S.K."/>
            <person name="Kurochkin I.V."/>
            <person name="Lareau L.F."/>
            <person name="Lazarevic D."/>
            <person name="Lipovich L."/>
            <person name="Liu J."/>
            <person name="Liuni S."/>
            <person name="McWilliam S."/>
            <person name="Madan Babu M."/>
            <person name="Madera M."/>
            <person name="Marchionni L."/>
            <person name="Matsuda H."/>
            <person name="Matsuzawa S."/>
            <person name="Miki H."/>
            <person name="Mignone F."/>
            <person name="Miyake S."/>
            <person name="Morris K."/>
            <person name="Mottagui-Tabar S."/>
            <person name="Mulder N."/>
            <person name="Nakano N."/>
            <person name="Nakauchi H."/>
            <person name="Ng P."/>
            <person name="Nilsson R."/>
            <person name="Nishiguchi S."/>
            <person name="Nishikawa S."/>
            <person name="Nori F."/>
            <person name="Ohara O."/>
            <person name="Okazaki Y."/>
            <person name="Orlando V."/>
            <person name="Pang K.C."/>
            <person name="Pavan W.J."/>
            <person name="Pavesi G."/>
            <person name="Pesole G."/>
            <person name="Petrovsky N."/>
            <person name="Piazza S."/>
            <person name="Reed J."/>
            <person name="Reid J.F."/>
            <person name="Ring B.Z."/>
            <person name="Ringwald M."/>
            <person name="Rost B."/>
            <person name="Ruan Y."/>
            <person name="Salzberg S.L."/>
            <person name="Sandelin A."/>
            <person name="Schneider C."/>
            <person name="Schoenbach C."/>
            <person name="Sekiguchi K."/>
            <person name="Semple C.A."/>
            <person name="Seno S."/>
            <person name="Sessa L."/>
            <person name="Sheng Y."/>
            <person name="Shibata Y."/>
            <person name="Shimada H."/>
            <person name="Shimada K."/>
            <person name="Silva D."/>
            <person name="Sinclair B."/>
            <person name="Sperling S."/>
            <person name="Stupka E."/>
            <person name="Sugiura K."/>
            <person name="Sultana R."/>
            <person name="Takenaka Y."/>
            <person name="Taki K."/>
            <person name="Tammoja K."/>
            <person name="Tan S.L."/>
            <person name="Tang S."/>
            <person name="Taylor M.S."/>
            <person name="Tegner J."/>
            <person name="Teichmann S.A."/>
            <person name="Ueda H.R."/>
            <person name="van Nimwegen E."/>
            <person name="Verardo R."/>
            <person name="Wei C.L."/>
            <person name="Yagi K."/>
            <person name="Yamanishi H."/>
            <person name="Zabarovsky E."/>
            <person name="Zhu S."/>
            <person name="Zimmer A."/>
            <person name="Hide W."/>
            <person name="Bult C."/>
            <person name="Grimmond S.M."/>
            <person name="Teasdale R.D."/>
            <person name="Liu E.T."/>
            <person name="Brusic V."/>
            <person name="Quackenbush J."/>
            <person name="Wahlestedt C."/>
            <person name="Mattick J.S."/>
            <person name="Hume D.A."/>
            <person name="Kai C."/>
            <person name="Sasaki D."/>
            <person name="Tomaru Y."/>
            <person name="Fukuda S."/>
            <person name="Kanamori-Katayama M."/>
            <person name="Suzuki M."/>
            <person name="Aoki J."/>
            <person name="Arakawa T."/>
            <person name="Iida J."/>
            <person name="Imamura K."/>
            <person name="Itoh M."/>
            <person name="Kato T."/>
            <person name="Kawaji H."/>
            <person name="Kawagashira N."/>
            <person name="Kawashima T."/>
            <person name="Kojima M."/>
            <person name="Kondo S."/>
            <person name="Konno H."/>
            <person name="Nakano K."/>
            <person name="Ninomiya N."/>
            <person name="Nishio T."/>
            <person name="Okada M."/>
            <person name="Plessy C."/>
            <person name="Shibata K."/>
            <person name="Shiraki T."/>
            <person name="Suzuki S."/>
            <person name="Tagami M."/>
            <person name="Waki K."/>
            <person name="Watahiki A."/>
            <person name="Okamura-Oho Y."/>
            <person name="Suzuki H."/>
            <person name="Kawai J."/>
            <person name="Hayashizaki Y."/>
        </authorList>
    </citation>
    <scope>NUCLEOTIDE SEQUENCE [LARGE SCALE MRNA]</scope>
    <source>
        <strain>NOD</strain>
        <tissue>Embryo</tissue>
        <tissue>Thymus</tissue>
    </source>
</reference>
<reference key="3">
    <citation type="journal article" date="2004" name="Genome Res.">
        <title>The status, quality, and expansion of the NIH full-length cDNA project: the Mammalian Gene Collection (MGC).</title>
        <authorList>
            <consortium name="The MGC Project Team"/>
        </authorList>
    </citation>
    <scope>NUCLEOTIDE SEQUENCE [LARGE SCALE MRNA]</scope>
    <source>
        <strain>Czech II</strain>
        <tissue>Mammary tumor</tissue>
    </source>
</reference>
<reference key="4">
    <citation type="journal article" date="2010" name="Cell">
        <title>A tissue-specific atlas of mouse protein phosphorylation and expression.</title>
        <authorList>
            <person name="Huttlin E.L."/>
            <person name="Jedrychowski M.P."/>
            <person name="Elias J.E."/>
            <person name="Goswami T."/>
            <person name="Rad R."/>
            <person name="Beausoleil S.A."/>
            <person name="Villen J."/>
            <person name="Haas W."/>
            <person name="Sowa M.E."/>
            <person name="Gygi S.P."/>
        </authorList>
    </citation>
    <scope>PHOSPHORYLATION [LARGE SCALE ANALYSIS] AT SER-349</scope>
    <scope>IDENTIFICATION BY MASS SPECTROMETRY [LARGE SCALE ANALYSIS]</scope>
    <source>
        <tissue>Brain</tissue>
        <tissue>Brown adipose tissue</tissue>
        <tissue>Heart</tissue>
        <tissue>Kidney</tissue>
        <tissue>Liver</tissue>
        <tissue>Lung</tissue>
        <tissue>Pancreas</tissue>
        <tissue>Spleen</tissue>
        <tissue>Testis</tissue>
    </source>
</reference>
<proteinExistence type="evidence at protein level"/>
<protein>
    <recommendedName>
        <fullName>Hsp70-binding protein 1</fullName>
        <shortName>HspBP1</shortName>
    </recommendedName>
    <alternativeName>
        <fullName>Heat shock protein-binding protein 1</fullName>
    </alternativeName>
    <alternativeName>
        <fullName>Hsp70-interacting protein 1</fullName>
    </alternativeName>
</protein>
<organism>
    <name type="scientific">Mus musculus</name>
    <name type="common">Mouse</name>
    <dbReference type="NCBI Taxonomy" id="10090"/>
    <lineage>
        <taxon>Eukaryota</taxon>
        <taxon>Metazoa</taxon>
        <taxon>Chordata</taxon>
        <taxon>Craniata</taxon>
        <taxon>Vertebrata</taxon>
        <taxon>Euteleostomi</taxon>
        <taxon>Mammalia</taxon>
        <taxon>Eutheria</taxon>
        <taxon>Euarchontoglires</taxon>
        <taxon>Glires</taxon>
        <taxon>Rodentia</taxon>
        <taxon>Myomorpha</taxon>
        <taxon>Muroidea</taxon>
        <taxon>Muridae</taxon>
        <taxon>Murinae</taxon>
        <taxon>Mus</taxon>
        <taxon>Mus</taxon>
    </lineage>
</organism>